<dbReference type="EMBL" id="AM180355">
    <property type="protein sequence ID" value="CAJ70196.1"/>
    <property type="molecule type" value="Genomic_DNA"/>
</dbReference>
<dbReference type="RefSeq" id="WP_003435615.1">
    <property type="nucleotide sequence ID" value="NZ_JAUPES010000002.1"/>
</dbReference>
<dbReference type="RefSeq" id="YP_001089815.1">
    <property type="nucleotide sequence ID" value="NC_009089.1"/>
</dbReference>
<dbReference type="SMR" id="Q180E3"/>
<dbReference type="STRING" id="272563.CD630_32990"/>
<dbReference type="TCDB" id="2.A.1.3.72">
    <property type="family name" value="the major facilitator superfamily (mfs)"/>
</dbReference>
<dbReference type="EnsemblBacteria" id="CAJ70196">
    <property type="protein sequence ID" value="CAJ70196"/>
    <property type="gene ID" value="CD630_32990"/>
</dbReference>
<dbReference type="KEGG" id="cdf:CD630_32990"/>
<dbReference type="KEGG" id="pdc:CDIF630_03600"/>
<dbReference type="PATRIC" id="fig|272563.120.peg.3484"/>
<dbReference type="eggNOG" id="COG2814">
    <property type="taxonomic scope" value="Bacteria"/>
</dbReference>
<dbReference type="OrthoDB" id="102502at2"/>
<dbReference type="PhylomeDB" id="Q180E3"/>
<dbReference type="BioCyc" id="PDIF272563:G12WB-3466-MONOMER"/>
<dbReference type="Proteomes" id="UP000001978">
    <property type="component" value="Chromosome"/>
</dbReference>
<dbReference type="GO" id="GO:0005886">
    <property type="term" value="C:plasma membrane"/>
    <property type="evidence" value="ECO:0007669"/>
    <property type="project" value="UniProtKB-SubCell"/>
</dbReference>
<dbReference type="GO" id="GO:0022857">
    <property type="term" value="F:transmembrane transporter activity"/>
    <property type="evidence" value="ECO:0007669"/>
    <property type="project" value="InterPro"/>
</dbReference>
<dbReference type="CDD" id="cd17321">
    <property type="entry name" value="MFS_MMR_MDR_like"/>
    <property type="match status" value="1"/>
</dbReference>
<dbReference type="FunFam" id="1.20.1720.10:FF:000021">
    <property type="entry name" value="Drug resistance transporter, EmrB/QacA subfamily"/>
    <property type="match status" value="1"/>
</dbReference>
<dbReference type="Gene3D" id="1.20.1250.20">
    <property type="entry name" value="MFS general substrate transporter like domains"/>
    <property type="match status" value="1"/>
</dbReference>
<dbReference type="Gene3D" id="1.20.1720.10">
    <property type="entry name" value="Multidrug resistance protein D"/>
    <property type="match status" value="1"/>
</dbReference>
<dbReference type="InterPro" id="IPR004638">
    <property type="entry name" value="EmrB-like"/>
</dbReference>
<dbReference type="InterPro" id="IPR011701">
    <property type="entry name" value="MFS"/>
</dbReference>
<dbReference type="InterPro" id="IPR020846">
    <property type="entry name" value="MFS_dom"/>
</dbReference>
<dbReference type="InterPro" id="IPR036259">
    <property type="entry name" value="MFS_trans_sf"/>
</dbReference>
<dbReference type="NCBIfam" id="TIGR00711">
    <property type="entry name" value="efflux_EmrB"/>
    <property type="match status" value="1"/>
</dbReference>
<dbReference type="PANTHER" id="PTHR42718:SF46">
    <property type="entry name" value="BLR6921 PROTEIN"/>
    <property type="match status" value="1"/>
</dbReference>
<dbReference type="PANTHER" id="PTHR42718">
    <property type="entry name" value="MAJOR FACILITATOR SUPERFAMILY MULTIDRUG TRANSPORTER MFSC"/>
    <property type="match status" value="1"/>
</dbReference>
<dbReference type="Pfam" id="PF07690">
    <property type="entry name" value="MFS_1"/>
    <property type="match status" value="1"/>
</dbReference>
<dbReference type="PRINTS" id="PR01036">
    <property type="entry name" value="TCRTETB"/>
</dbReference>
<dbReference type="SUPFAM" id="SSF103473">
    <property type="entry name" value="MFS general substrate transporter"/>
    <property type="match status" value="1"/>
</dbReference>
<dbReference type="PROSITE" id="PS50850">
    <property type="entry name" value="MFS"/>
    <property type="match status" value="1"/>
</dbReference>
<evidence type="ECO:0000255" key="1"/>
<evidence type="ECO:0000269" key="2">
    <source>
    </source>
</evidence>
<evidence type="ECO:0000303" key="3">
    <source>
    </source>
</evidence>
<evidence type="ECO:0000305" key="4"/>
<evidence type="ECO:0000312" key="5">
    <source>
        <dbReference type="EMBL" id="CAJ70196.1"/>
    </source>
</evidence>
<gene>
    <name evidence="3" type="primary">ribZ</name>
    <name evidence="5" type="ordered locus">CD630_32990</name>
</gene>
<name>RIBZ_CLOD6</name>
<comment type="function">
    <text evidence="2">Transports riboflavin into the cell.</text>
</comment>
<comment type="subcellular location">
    <subcellularLocation>
        <location evidence="4">Cell membrane</location>
        <topology evidence="1">Multi-pass membrane protein</topology>
    </subcellularLocation>
</comment>
<comment type="induction">
    <text evidence="2">Expression is probably regulated by riboflavin, via an FMN riboswitch.</text>
</comment>
<comment type="similarity">
    <text evidence="4">Belongs to the major facilitator superfamily.</text>
</comment>
<keyword id="KW-1003">Cell membrane</keyword>
<keyword id="KW-0472">Membrane</keyword>
<keyword id="KW-1185">Reference proteome</keyword>
<keyword id="KW-0812">Transmembrane</keyword>
<keyword id="KW-1133">Transmembrane helix</keyword>
<keyword id="KW-0813">Transport</keyword>
<accession>Q180E3</accession>
<protein>
    <recommendedName>
        <fullName evidence="4">Riboflavin transporter RibZ</fullName>
    </recommendedName>
</protein>
<sequence length="456" mass="49388">MKQKWIVLIIICIGVFMSTLDGSILNIANPTIAADFKINMSQIQWVVTAYMLVVTATMLFFGKLGDKVGSNRLYTLGFFIFTIGSFLCSMSNNLSTLISSRIFQAVGASILMATGLGIVSNAFPANEKGKAIGITGAVVGIGNMSGPVIGGIILEHFGWPSIFIINIPIGIIAVFLGIKFLPKPVLDEQNKSFDIPGLLLFASCTTLILLAMNEKGNTRLYLGITALIIFLLLALREVKFEQSFIDLPLFKNRNFTVGNIIGVACYFPQMAVSFLLPFYLEQLKNLSPMMAGYVMTVHPLIMVLIAPIAGSLSDKHGAKNILTASFSFMTISLVGMALLKADSPLYLLIVCLVIFGLGLGAFSSPNNSSILADVPPQKQGYGGSFLATIRNLSFALGTAFFSSFFAQSLTYNQKFKSHTSAYVIASNQSYWIAASVCFIGLILTVFFMRKTDKSIS</sequence>
<reference key="1">
    <citation type="journal article" date="2006" name="Nat. Genet.">
        <title>The multidrug-resistant human pathogen Clostridium difficile has a highly mobile, mosaic genome.</title>
        <authorList>
            <person name="Sebaihia M."/>
            <person name="Wren B.W."/>
            <person name="Mullany P."/>
            <person name="Fairweather N.F."/>
            <person name="Minton N."/>
            <person name="Stabler R."/>
            <person name="Thomson N.R."/>
            <person name="Roberts A.P."/>
            <person name="Cerdeno-Tarraga A.M."/>
            <person name="Wang H."/>
            <person name="Holden M.T.G."/>
            <person name="Wright A."/>
            <person name="Churcher C."/>
            <person name="Quail M.A."/>
            <person name="Baker S."/>
            <person name="Bason N."/>
            <person name="Brooks K."/>
            <person name="Chillingworth T."/>
            <person name="Cronin A."/>
            <person name="Davis P."/>
            <person name="Dowd L."/>
            <person name="Fraser A."/>
            <person name="Feltwell T."/>
            <person name="Hance Z."/>
            <person name="Holroyd S."/>
            <person name="Jagels K."/>
            <person name="Moule S."/>
            <person name="Mungall K."/>
            <person name="Price C."/>
            <person name="Rabbinowitsch E."/>
            <person name="Sharp S."/>
            <person name="Simmonds M."/>
            <person name="Stevens K."/>
            <person name="Unwin L."/>
            <person name="Whithead S."/>
            <person name="Dupuy B."/>
            <person name="Dougan G."/>
            <person name="Barrell B."/>
            <person name="Parkhill J."/>
        </authorList>
    </citation>
    <scope>NUCLEOTIDE SEQUENCE [LARGE SCALE GENOMIC DNA]</scope>
    <source>
        <strain>630</strain>
    </source>
</reference>
<reference key="2">
    <citation type="journal article" date="2015" name="PLoS ONE">
        <title>Extensive identification of bacterial riboflavin transporters and their distribution across bacterial species.</title>
        <authorList>
            <person name="Gutierrez-Preciado A."/>
            <person name="Torres A.G."/>
            <person name="Merino E."/>
            <person name="Bonomi H.R."/>
            <person name="Goldbaum F.A."/>
            <person name="Garcia-Angulo V.A."/>
        </authorList>
    </citation>
    <scope>FUNCTION AS A TRANSPORTER</scope>
    <scope>INDUCTION</scope>
    <source>
        <strain>630</strain>
    </source>
</reference>
<feature type="chain" id="PRO_0000438275" description="Riboflavin transporter RibZ">
    <location>
        <begin position="1"/>
        <end position="456"/>
    </location>
</feature>
<feature type="transmembrane region" description="Helical" evidence="1">
    <location>
        <begin position="5"/>
        <end position="25"/>
    </location>
</feature>
<feature type="transmembrane region" description="Helical" evidence="1">
    <location>
        <begin position="45"/>
        <end position="65"/>
    </location>
</feature>
<feature type="transmembrane region" description="Helical" evidence="1">
    <location>
        <begin position="78"/>
        <end position="98"/>
    </location>
</feature>
<feature type="transmembrane region" description="Helical" evidence="1">
    <location>
        <begin position="105"/>
        <end position="125"/>
    </location>
</feature>
<feature type="transmembrane region" description="Helical" evidence="1">
    <location>
        <begin position="134"/>
        <end position="154"/>
    </location>
</feature>
<feature type="transmembrane region" description="Helical" evidence="1">
    <location>
        <begin position="158"/>
        <end position="178"/>
    </location>
</feature>
<feature type="transmembrane region" description="Helical" evidence="1">
    <location>
        <begin position="192"/>
        <end position="212"/>
    </location>
</feature>
<feature type="transmembrane region" description="Helical" evidence="1">
    <location>
        <begin position="220"/>
        <end position="240"/>
    </location>
</feature>
<feature type="transmembrane region" description="Helical" evidence="1">
    <location>
        <begin position="260"/>
        <end position="280"/>
    </location>
</feature>
<feature type="transmembrane region" description="Helical" evidence="1">
    <location>
        <begin position="289"/>
        <end position="309"/>
    </location>
</feature>
<feature type="transmembrane region" description="Helical" evidence="1">
    <location>
        <begin position="321"/>
        <end position="341"/>
    </location>
</feature>
<feature type="transmembrane region" description="Helical" evidence="1">
    <location>
        <begin position="343"/>
        <end position="363"/>
    </location>
</feature>
<feature type="transmembrane region" description="Helical" evidence="1">
    <location>
        <begin position="385"/>
        <end position="405"/>
    </location>
</feature>
<feature type="transmembrane region" description="Helical" evidence="1">
    <location>
        <begin position="428"/>
        <end position="448"/>
    </location>
</feature>
<organism>
    <name type="scientific">Clostridioides difficile (strain 630)</name>
    <name type="common">Peptoclostridium difficile</name>
    <dbReference type="NCBI Taxonomy" id="272563"/>
    <lineage>
        <taxon>Bacteria</taxon>
        <taxon>Bacillati</taxon>
        <taxon>Bacillota</taxon>
        <taxon>Clostridia</taxon>
        <taxon>Peptostreptococcales</taxon>
        <taxon>Peptostreptococcaceae</taxon>
        <taxon>Clostridioides</taxon>
    </lineage>
</organism>
<proteinExistence type="evidence at protein level"/>